<gene>
    <name evidence="4" type="ordered locus">YMR173W-A</name>
</gene>
<accession>A0A023PXQ4</accession>
<keyword id="KW-0472">Membrane</keyword>
<keyword id="KW-0812">Transmembrane</keyword>
<keyword id="KW-1133">Transmembrane helix</keyword>
<sequence>MTTTPTTTTHMVLITTIHMVLTTMIHMALTTMIHMAPTTMIHMALTTMIPTVLPTRRRALMVLTMTIRTAPATTMTLTVPTTMTLTVPTTMTLTVPTMTTLTVRQTRIRALTVPTMTILMALTMMIHMVLPTRRRVLMVPATTIRMVLTTMIHMVLTTMIHMALTTMIPTVLPTRRRALMVLTMTIRTAPATTMTLTVPTMTTLTVRQTRIRALTVLLATMILTDLPITTTLTVLPTRRRVLMVPTMTILMALTMMIHMVLPTRRRVLMVPATTIRMVLTTMIPTVLLTKRRVLMVPTTMIHTAPATTMTLTVPTMTTLTVPLIETRTPMGLPTTVHPTMMTLMVHLIEAVVINTVVTTITKFLDVFDKKNILLCLDLSMKILCMSCGYVSAGK</sequence>
<feature type="chain" id="PRO_0000431054" description="Putative uncharacterized membrane protein YMR173W-A">
    <location>
        <begin position="1"/>
        <end position="394"/>
    </location>
</feature>
<feature type="transmembrane region" description="Helical; Name=1" evidence="1">
    <location>
        <begin position="13"/>
        <end position="33"/>
    </location>
</feature>
<feature type="transmembrane region" description="Helical; Name=2" evidence="1">
    <location>
        <begin position="35"/>
        <end position="55"/>
    </location>
</feature>
<feature type="transmembrane region" description="Helical; Name=3" evidence="1">
    <location>
        <begin position="73"/>
        <end position="95"/>
    </location>
</feature>
<feature type="transmembrane region" description="Helical; Name=4" evidence="1">
    <location>
        <begin position="110"/>
        <end position="130"/>
    </location>
</feature>
<feature type="transmembrane region" description="Helical; Name=5" evidence="1">
    <location>
        <begin position="152"/>
        <end position="172"/>
    </location>
</feature>
<feature type="transmembrane region" description="Helical; Name=6" evidence="1">
    <location>
        <begin position="179"/>
        <end position="198"/>
    </location>
</feature>
<feature type="transmembrane region" description="Helical; Name=7" evidence="1">
    <location>
        <begin position="216"/>
        <end position="236"/>
    </location>
</feature>
<feature type="transmembrane region" description="Helical; Name=8" evidence="1">
    <location>
        <begin position="241"/>
        <end position="261"/>
    </location>
</feature>
<feature type="transmembrane region" description="Helical; Name=9" evidence="1">
    <location>
        <begin position="267"/>
        <end position="287"/>
    </location>
</feature>
<feature type="transmembrane region" description="Helical; Name=10" evidence="1">
    <location>
        <begin position="293"/>
        <end position="313"/>
    </location>
</feature>
<feature type="transmembrane region" description="Helical; Name=11" evidence="1">
    <location>
        <begin position="340"/>
        <end position="360"/>
    </location>
</feature>
<feature type="transmembrane region" description="Helical; Name=12" evidence="1">
    <location>
        <begin position="372"/>
        <end position="392"/>
    </location>
</feature>
<reference key="1">
    <citation type="journal article" date="1997" name="Nature">
        <title>The nucleotide sequence of Saccharomyces cerevisiae chromosome XIII.</title>
        <authorList>
            <person name="Bowman S."/>
            <person name="Churcher C.M."/>
            <person name="Badcock K."/>
            <person name="Brown D."/>
            <person name="Chillingworth T."/>
            <person name="Connor R."/>
            <person name="Dedman K."/>
            <person name="Devlin K."/>
            <person name="Gentles S."/>
            <person name="Hamlin N."/>
            <person name="Hunt S."/>
            <person name="Jagels K."/>
            <person name="Lye G."/>
            <person name="Moule S."/>
            <person name="Odell C."/>
            <person name="Pearson D."/>
            <person name="Rajandream M.A."/>
            <person name="Rice P."/>
            <person name="Skelton J."/>
            <person name="Walsh S.V."/>
            <person name="Whitehead S."/>
            <person name="Barrell B.G."/>
        </authorList>
    </citation>
    <scope>NUCLEOTIDE SEQUENCE [LARGE SCALE GENOMIC DNA]</scope>
    <source>
        <strain>ATCC 204508 / S288c</strain>
    </source>
</reference>
<reference key="2">
    <citation type="journal article" date="2014" name="G3 (Bethesda)">
        <title>The reference genome sequence of Saccharomyces cerevisiae: Then and now.</title>
        <authorList>
            <person name="Engel S.R."/>
            <person name="Dietrich F.S."/>
            <person name="Fisk D.G."/>
            <person name="Binkley G."/>
            <person name="Balakrishnan R."/>
            <person name="Costanzo M.C."/>
            <person name="Dwight S.S."/>
            <person name="Hitz B.C."/>
            <person name="Karra K."/>
            <person name="Nash R.S."/>
            <person name="Weng S."/>
            <person name="Wong E.D."/>
            <person name="Lloyd P."/>
            <person name="Skrzypek M.S."/>
            <person name="Miyasato S.R."/>
            <person name="Simison M."/>
            <person name="Cherry J.M."/>
        </authorList>
    </citation>
    <scope>GENOME REANNOTATION</scope>
    <source>
        <strain>ATCC 204508 / S288c</strain>
    </source>
</reference>
<name>YM173_YEAST</name>
<organism>
    <name type="scientific">Saccharomyces cerevisiae (strain ATCC 204508 / S288c)</name>
    <name type="common">Baker's yeast</name>
    <dbReference type="NCBI Taxonomy" id="559292"/>
    <lineage>
        <taxon>Eukaryota</taxon>
        <taxon>Fungi</taxon>
        <taxon>Dikarya</taxon>
        <taxon>Ascomycota</taxon>
        <taxon>Saccharomycotina</taxon>
        <taxon>Saccharomycetes</taxon>
        <taxon>Saccharomycetales</taxon>
        <taxon>Saccharomycetaceae</taxon>
        <taxon>Saccharomyces</taxon>
    </lineage>
</organism>
<proteinExistence type="uncertain"/>
<dbReference type="EMBL" id="KJ412292">
    <property type="protein sequence ID" value="AHX39335.1"/>
    <property type="molecule type" value="Genomic_DNA"/>
</dbReference>
<dbReference type="PIR" id="S69870">
    <property type="entry name" value="S69870"/>
</dbReference>
<dbReference type="STRING" id="4932.YMR173W-A"/>
<dbReference type="iPTMnet" id="A0A023PXQ4"/>
<dbReference type="PaxDb" id="4932-YMR173W-A"/>
<dbReference type="EnsemblFungi" id="YMR173W-A_mRNA">
    <property type="protein sequence ID" value="YMR173W-A"/>
    <property type="gene ID" value="YMR173W-A"/>
</dbReference>
<dbReference type="AGR" id="SGD:S000004785"/>
<dbReference type="SGD" id="S000004785">
    <property type="gene designation" value="YMR173W-A"/>
</dbReference>
<dbReference type="HOGENOM" id="CLU_625859_0_0_1"/>
<dbReference type="GO" id="GO:0016020">
    <property type="term" value="C:membrane"/>
    <property type="evidence" value="ECO:0007669"/>
    <property type="project" value="UniProtKB-SubCell"/>
</dbReference>
<comment type="subcellular location">
    <subcellularLocation>
        <location evidence="1">Membrane</location>
        <topology evidence="1">Multi-pass membrane protein</topology>
    </subcellularLocation>
</comment>
<comment type="miscellaneous">
    <text evidence="2">Partially overlaps DDR48.</text>
</comment>
<comment type="caution">
    <text evidence="3">Product of a dubious gene prediction unlikely to encode a functional protein. Because of that it is not part of the S.cerevisiae S288c complete/reference proteome set.</text>
</comment>
<evidence type="ECO:0000255" key="1"/>
<evidence type="ECO:0000305" key="2"/>
<evidence type="ECO:0000305" key="3">
    <source>
    </source>
</evidence>
<evidence type="ECO:0000312" key="4">
    <source>
        <dbReference type="SGD" id="S000004785"/>
    </source>
</evidence>
<protein>
    <recommendedName>
        <fullName evidence="2">Putative uncharacterized membrane protein YMR173W-A</fullName>
    </recommendedName>
</protein>